<gene>
    <name evidence="1" type="primary">ligA</name>
    <name type="ordered locus">VC_0971</name>
</gene>
<feature type="chain" id="PRO_0000313504" description="DNA ligase">
    <location>
        <begin position="1"/>
        <end position="669"/>
    </location>
</feature>
<feature type="domain" description="BRCT" evidence="1">
    <location>
        <begin position="592"/>
        <end position="669"/>
    </location>
</feature>
<feature type="active site" description="N6-AMP-lysine intermediate" evidence="1">
    <location>
        <position position="115"/>
    </location>
</feature>
<feature type="binding site" evidence="1">
    <location>
        <begin position="32"/>
        <end position="36"/>
    </location>
    <ligand>
        <name>NAD(+)</name>
        <dbReference type="ChEBI" id="CHEBI:57540"/>
    </ligand>
</feature>
<feature type="binding site" evidence="1">
    <location>
        <begin position="81"/>
        <end position="82"/>
    </location>
    <ligand>
        <name>NAD(+)</name>
        <dbReference type="ChEBI" id="CHEBI:57540"/>
    </ligand>
</feature>
<feature type="binding site" evidence="1">
    <location>
        <position position="113"/>
    </location>
    <ligand>
        <name>NAD(+)</name>
        <dbReference type="ChEBI" id="CHEBI:57540"/>
    </ligand>
</feature>
<feature type="binding site" evidence="1">
    <location>
        <position position="136"/>
    </location>
    <ligand>
        <name>NAD(+)</name>
        <dbReference type="ChEBI" id="CHEBI:57540"/>
    </ligand>
</feature>
<feature type="binding site" evidence="1">
    <location>
        <position position="173"/>
    </location>
    <ligand>
        <name>NAD(+)</name>
        <dbReference type="ChEBI" id="CHEBI:57540"/>
    </ligand>
</feature>
<feature type="binding site" evidence="1">
    <location>
        <position position="290"/>
    </location>
    <ligand>
        <name>NAD(+)</name>
        <dbReference type="ChEBI" id="CHEBI:57540"/>
    </ligand>
</feature>
<feature type="binding site" evidence="1">
    <location>
        <position position="314"/>
    </location>
    <ligand>
        <name>NAD(+)</name>
        <dbReference type="ChEBI" id="CHEBI:57540"/>
    </ligand>
</feature>
<feature type="binding site" evidence="1">
    <location>
        <position position="408"/>
    </location>
    <ligand>
        <name>Zn(2+)</name>
        <dbReference type="ChEBI" id="CHEBI:29105"/>
    </ligand>
</feature>
<feature type="binding site" evidence="1">
    <location>
        <position position="411"/>
    </location>
    <ligand>
        <name>Zn(2+)</name>
        <dbReference type="ChEBI" id="CHEBI:29105"/>
    </ligand>
</feature>
<feature type="binding site" evidence="1">
    <location>
        <position position="426"/>
    </location>
    <ligand>
        <name>Zn(2+)</name>
        <dbReference type="ChEBI" id="CHEBI:29105"/>
    </ligand>
</feature>
<feature type="binding site" evidence="1">
    <location>
        <position position="432"/>
    </location>
    <ligand>
        <name>Zn(2+)</name>
        <dbReference type="ChEBI" id="CHEBI:29105"/>
    </ligand>
</feature>
<organism>
    <name type="scientific">Vibrio cholerae serotype O1 (strain ATCC 39315 / El Tor Inaba N16961)</name>
    <dbReference type="NCBI Taxonomy" id="243277"/>
    <lineage>
        <taxon>Bacteria</taxon>
        <taxon>Pseudomonadati</taxon>
        <taxon>Pseudomonadota</taxon>
        <taxon>Gammaproteobacteria</taxon>
        <taxon>Vibrionales</taxon>
        <taxon>Vibrionaceae</taxon>
        <taxon>Vibrio</taxon>
    </lineage>
</organism>
<reference key="1">
    <citation type="journal article" date="2000" name="Nature">
        <title>DNA sequence of both chromosomes of the cholera pathogen Vibrio cholerae.</title>
        <authorList>
            <person name="Heidelberg J.F."/>
            <person name="Eisen J.A."/>
            <person name="Nelson W.C."/>
            <person name="Clayton R.A."/>
            <person name="Gwinn M.L."/>
            <person name="Dodson R.J."/>
            <person name="Haft D.H."/>
            <person name="Hickey E.K."/>
            <person name="Peterson J.D."/>
            <person name="Umayam L.A."/>
            <person name="Gill S.R."/>
            <person name="Nelson K.E."/>
            <person name="Read T.D."/>
            <person name="Tettelin H."/>
            <person name="Richardson D.L."/>
            <person name="Ermolaeva M.D."/>
            <person name="Vamathevan J.J."/>
            <person name="Bass S."/>
            <person name="Qin H."/>
            <person name="Dragoi I."/>
            <person name="Sellers P."/>
            <person name="McDonald L.A."/>
            <person name="Utterback T.R."/>
            <person name="Fleischmann R.D."/>
            <person name="Nierman W.C."/>
            <person name="White O."/>
            <person name="Salzberg S.L."/>
            <person name="Smith H.O."/>
            <person name="Colwell R.R."/>
            <person name="Mekalanos J.J."/>
            <person name="Venter J.C."/>
            <person name="Fraser C.M."/>
        </authorList>
    </citation>
    <scope>NUCLEOTIDE SEQUENCE [LARGE SCALE GENOMIC DNA]</scope>
    <source>
        <strain>ATCC 39315 / El Tor Inaba N16961</strain>
    </source>
</reference>
<sequence>MSDVAQRLTELRKTLHEHGVRYYVEDAPSIPDAEYDRLMRELLELEAAHPELMSSDSPSLRVGGRPLDAFESVVHEIPMLSLDNAFDDGELESFYRRMTDRIPAVQHSAFCCEPKLDGLAVSLLYENGVLTRAATRGDGTTGENITENVRTIKSIPLRLQGADFPTRLEVRGEVFMPKAGFEALNARALKKGEKQFVNPRNAAAGSLRQLDSKITAQRPLAFYAYSVGVIEGGELATSHYQRFLQLKGWGLPICPETKLVTSLAEVKAFYQDILQRRQSLAYEIDGVVIKVDDIQLQERLGFVARAPRWAIAYKFPAQEELTLLNDVEFQVGRTGAITPVAKLEPVFVGGVTVSNATLHNADEIERLGVMVGDTVVIRRAGDVIPQIVSVVLERRPENAKSIVFPTRCPVCQSDVERVEGEAVARCSGGLICQAQRKEALKHFVSRKAMDVEGLGDKVIEQLVDREMVSTPADLFRLRAGELTILERMGPKSAQNVIDALNKAKQTTLPKFLYALGIREVGEATALNLAQHFLSLEAIQQASLEQFIEVPDVGVVVASHLQAFFAQDRNQQVINELLEQGITWPALTAAPVAVDSALAGKIVVLTGSFTQLSRNDAKAALQALGAKVTGSVSKNTDMVFAGEAAGSKLAKATELGIQVFDEQALIEFLK</sequence>
<protein>
    <recommendedName>
        <fullName evidence="1">DNA ligase</fullName>
        <ecNumber evidence="1">6.5.1.2</ecNumber>
    </recommendedName>
    <alternativeName>
        <fullName evidence="1">Polydeoxyribonucleotide synthase [NAD(+)]</fullName>
    </alternativeName>
</protein>
<comment type="function">
    <text evidence="1">DNA ligase that catalyzes the formation of phosphodiester linkages between 5'-phosphoryl and 3'-hydroxyl groups in double-stranded DNA using NAD as a coenzyme and as the energy source for the reaction. It is essential for DNA replication and repair of damaged DNA.</text>
</comment>
<comment type="catalytic activity">
    <reaction evidence="1">
        <text>NAD(+) + (deoxyribonucleotide)n-3'-hydroxyl + 5'-phospho-(deoxyribonucleotide)m = (deoxyribonucleotide)n+m + AMP + beta-nicotinamide D-nucleotide.</text>
        <dbReference type="EC" id="6.5.1.2"/>
    </reaction>
</comment>
<comment type="cofactor">
    <cofactor evidence="1">
        <name>Mg(2+)</name>
        <dbReference type="ChEBI" id="CHEBI:18420"/>
    </cofactor>
    <cofactor evidence="1">
        <name>Mn(2+)</name>
        <dbReference type="ChEBI" id="CHEBI:29035"/>
    </cofactor>
</comment>
<comment type="similarity">
    <text evidence="1">Belongs to the NAD-dependent DNA ligase family. LigA subfamily.</text>
</comment>
<accession>Q9KTD1</accession>
<dbReference type="EC" id="6.5.1.2" evidence="1"/>
<dbReference type="EMBL" id="AE003852">
    <property type="protein sequence ID" value="AAF94133.1"/>
    <property type="molecule type" value="Genomic_DNA"/>
</dbReference>
<dbReference type="PIR" id="F82258">
    <property type="entry name" value="F82258"/>
</dbReference>
<dbReference type="RefSeq" id="NP_230618.1">
    <property type="nucleotide sequence ID" value="NC_002505.1"/>
</dbReference>
<dbReference type="RefSeq" id="WP_001286040.1">
    <property type="nucleotide sequence ID" value="NZ_LT906614.1"/>
</dbReference>
<dbReference type="SMR" id="Q9KTD1"/>
<dbReference type="STRING" id="243277.VC_0971"/>
<dbReference type="EnsemblBacteria" id="AAF94133">
    <property type="protein sequence ID" value="AAF94133"/>
    <property type="gene ID" value="VC_0971"/>
</dbReference>
<dbReference type="KEGG" id="vch:VC_0971"/>
<dbReference type="PATRIC" id="fig|243277.26.peg.924"/>
<dbReference type="eggNOG" id="COG0272">
    <property type="taxonomic scope" value="Bacteria"/>
</dbReference>
<dbReference type="HOGENOM" id="CLU_007764_2_1_6"/>
<dbReference type="Proteomes" id="UP000000584">
    <property type="component" value="Chromosome 1"/>
</dbReference>
<dbReference type="GO" id="GO:0005829">
    <property type="term" value="C:cytosol"/>
    <property type="evidence" value="ECO:0000318"/>
    <property type="project" value="GO_Central"/>
</dbReference>
<dbReference type="GO" id="GO:0003677">
    <property type="term" value="F:DNA binding"/>
    <property type="evidence" value="ECO:0007669"/>
    <property type="project" value="InterPro"/>
</dbReference>
<dbReference type="GO" id="GO:0003911">
    <property type="term" value="F:DNA ligase (NAD+) activity"/>
    <property type="evidence" value="ECO:0000318"/>
    <property type="project" value="GO_Central"/>
</dbReference>
<dbReference type="GO" id="GO:0046872">
    <property type="term" value="F:metal ion binding"/>
    <property type="evidence" value="ECO:0007669"/>
    <property type="project" value="UniProtKB-KW"/>
</dbReference>
<dbReference type="GO" id="GO:0006281">
    <property type="term" value="P:DNA repair"/>
    <property type="evidence" value="ECO:0007669"/>
    <property type="project" value="UniProtKB-KW"/>
</dbReference>
<dbReference type="GO" id="GO:0006260">
    <property type="term" value="P:DNA replication"/>
    <property type="evidence" value="ECO:0007669"/>
    <property type="project" value="UniProtKB-KW"/>
</dbReference>
<dbReference type="CDD" id="cd17748">
    <property type="entry name" value="BRCT_DNA_ligase_like"/>
    <property type="match status" value="1"/>
</dbReference>
<dbReference type="CDD" id="cd00114">
    <property type="entry name" value="LIGANc"/>
    <property type="match status" value="1"/>
</dbReference>
<dbReference type="FunFam" id="1.10.150.20:FF:000006">
    <property type="entry name" value="DNA ligase"/>
    <property type="match status" value="1"/>
</dbReference>
<dbReference type="FunFam" id="1.10.150.20:FF:000007">
    <property type="entry name" value="DNA ligase"/>
    <property type="match status" value="1"/>
</dbReference>
<dbReference type="FunFam" id="1.10.287.610:FF:000002">
    <property type="entry name" value="DNA ligase"/>
    <property type="match status" value="1"/>
</dbReference>
<dbReference type="FunFam" id="2.40.50.140:FF:000012">
    <property type="entry name" value="DNA ligase"/>
    <property type="match status" value="1"/>
</dbReference>
<dbReference type="FunFam" id="3.30.470.30:FF:000001">
    <property type="entry name" value="DNA ligase"/>
    <property type="match status" value="1"/>
</dbReference>
<dbReference type="FunFam" id="6.20.10.30:FF:000001">
    <property type="entry name" value="DNA ligase"/>
    <property type="match status" value="1"/>
</dbReference>
<dbReference type="Gene3D" id="6.20.10.30">
    <property type="match status" value="1"/>
</dbReference>
<dbReference type="Gene3D" id="1.10.150.20">
    <property type="entry name" value="5' to 3' exonuclease, C-terminal subdomain"/>
    <property type="match status" value="2"/>
</dbReference>
<dbReference type="Gene3D" id="3.40.50.10190">
    <property type="entry name" value="BRCT domain"/>
    <property type="match status" value="1"/>
</dbReference>
<dbReference type="Gene3D" id="3.30.470.30">
    <property type="entry name" value="DNA ligase/mRNA capping enzyme"/>
    <property type="match status" value="1"/>
</dbReference>
<dbReference type="Gene3D" id="1.10.287.610">
    <property type="entry name" value="Helix hairpin bin"/>
    <property type="match status" value="1"/>
</dbReference>
<dbReference type="Gene3D" id="2.40.50.140">
    <property type="entry name" value="Nucleic acid-binding proteins"/>
    <property type="match status" value="1"/>
</dbReference>
<dbReference type="HAMAP" id="MF_01588">
    <property type="entry name" value="DNA_ligase_A"/>
    <property type="match status" value="1"/>
</dbReference>
<dbReference type="InterPro" id="IPR001357">
    <property type="entry name" value="BRCT_dom"/>
</dbReference>
<dbReference type="InterPro" id="IPR036420">
    <property type="entry name" value="BRCT_dom_sf"/>
</dbReference>
<dbReference type="InterPro" id="IPR041663">
    <property type="entry name" value="DisA/LigA_HHH"/>
</dbReference>
<dbReference type="InterPro" id="IPR001679">
    <property type="entry name" value="DNA_ligase"/>
</dbReference>
<dbReference type="InterPro" id="IPR018239">
    <property type="entry name" value="DNA_ligase_AS"/>
</dbReference>
<dbReference type="InterPro" id="IPR033136">
    <property type="entry name" value="DNA_ligase_CS"/>
</dbReference>
<dbReference type="InterPro" id="IPR013839">
    <property type="entry name" value="DNAligase_adenylation"/>
</dbReference>
<dbReference type="InterPro" id="IPR013840">
    <property type="entry name" value="DNAligase_N"/>
</dbReference>
<dbReference type="InterPro" id="IPR003583">
    <property type="entry name" value="Hlx-hairpin-Hlx_DNA-bd_motif"/>
</dbReference>
<dbReference type="InterPro" id="IPR012340">
    <property type="entry name" value="NA-bd_OB-fold"/>
</dbReference>
<dbReference type="InterPro" id="IPR004150">
    <property type="entry name" value="NAD_DNA_ligase_OB"/>
</dbReference>
<dbReference type="InterPro" id="IPR010994">
    <property type="entry name" value="RuvA_2-like"/>
</dbReference>
<dbReference type="InterPro" id="IPR004149">
    <property type="entry name" value="Znf_DNAligase_C4"/>
</dbReference>
<dbReference type="NCBIfam" id="TIGR00575">
    <property type="entry name" value="dnlj"/>
    <property type="match status" value="1"/>
</dbReference>
<dbReference type="NCBIfam" id="NF005932">
    <property type="entry name" value="PRK07956.1"/>
    <property type="match status" value="1"/>
</dbReference>
<dbReference type="PANTHER" id="PTHR23389">
    <property type="entry name" value="CHROMOSOME TRANSMISSION FIDELITY FACTOR 18"/>
    <property type="match status" value="1"/>
</dbReference>
<dbReference type="PANTHER" id="PTHR23389:SF9">
    <property type="entry name" value="DNA LIGASE"/>
    <property type="match status" value="1"/>
</dbReference>
<dbReference type="Pfam" id="PF00533">
    <property type="entry name" value="BRCT"/>
    <property type="match status" value="1"/>
</dbReference>
<dbReference type="Pfam" id="PF01653">
    <property type="entry name" value="DNA_ligase_aden"/>
    <property type="match status" value="1"/>
</dbReference>
<dbReference type="Pfam" id="PF03120">
    <property type="entry name" value="DNA_ligase_OB"/>
    <property type="match status" value="1"/>
</dbReference>
<dbReference type="Pfam" id="PF03119">
    <property type="entry name" value="DNA_ligase_ZBD"/>
    <property type="match status" value="1"/>
</dbReference>
<dbReference type="Pfam" id="PF12826">
    <property type="entry name" value="HHH_2"/>
    <property type="match status" value="1"/>
</dbReference>
<dbReference type="Pfam" id="PF14520">
    <property type="entry name" value="HHH_5"/>
    <property type="match status" value="1"/>
</dbReference>
<dbReference type="Pfam" id="PF22745">
    <property type="entry name" value="Nlig-Ia"/>
    <property type="match status" value="1"/>
</dbReference>
<dbReference type="PIRSF" id="PIRSF001604">
    <property type="entry name" value="LigA"/>
    <property type="match status" value="1"/>
</dbReference>
<dbReference type="SMART" id="SM00292">
    <property type="entry name" value="BRCT"/>
    <property type="match status" value="1"/>
</dbReference>
<dbReference type="SMART" id="SM00278">
    <property type="entry name" value="HhH1"/>
    <property type="match status" value="4"/>
</dbReference>
<dbReference type="SMART" id="SM00532">
    <property type="entry name" value="LIGANc"/>
    <property type="match status" value="1"/>
</dbReference>
<dbReference type="SUPFAM" id="SSF52113">
    <property type="entry name" value="BRCT domain"/>
    <property type="match status" value="1"/>
</dbReference>
<dbReference type="SUPFAM" id="SSF56091">
    <property type="entry name" value="DNA ligase/mRNA capping enzyme, catalytic domain"/>
    <property type="match status" value="1"/>
</dbReference>
<dbReference type="SUPFAM" id="SSF50249">
    <property type="entry name" value="Nucleic acid-binding proteins"/>
    <property type="match status" value="1"/>
</dbReference>
<dbReference type="SUPFAM" id="SSF47781">
    <property type="entry name" value="RuvA domain 2-like"/>
    <property type="match status" value="1"/>
</dbReference>
<dbReference type="PROSITE" id="PS50172">
    <property type="entry name" value="BRCT"/>
    <property type="match status" value="1"/>
</dbReference>
<dbReference type="PROSITE" id="PS01055">
    <property type="entry name" value="DNA_LIGASE_N1"/>
    <property type="match status" value="1"/>
</dbReference>
<dbReference type="PROSITE" id="PS01056">
    <property type="entry name" value="DNA_LIGASE_N2"/>
    <property type="match status" value="1"/>
</dbReference>
<proteinExistence type="inferred from homology"/>
<keyword id="KW-0227">DNA damage</keyword>
<keyword id="KW-0234">DNA repair</keyword>
<keyword id="KW-0235">DNA replication</keyword>
<keyword id="KW-0436">Ligase</keyword>
<keyword id="KW-0460">Magnesium</keyword>
<keyword id="KW-0464">Manganese</keyword>
<keyword id="KW-0479">Metal-binding</keyword>
<keyword id="KW-0520">NAD</keyword>
<keyword id="KW-1185">Reference proteome</keyword>
<keyword id="KW-0862">Zinc</keyword>
<evidence type="ECO:0000255" key="1">
    <source>
        <dbReference type="HAMAP-Rule" id="MF_01588"/>
    </source>
</evidence>
<name>DNLJ_VIBCH</name>